<evidence type="ECO:0000255" key="1">
    <source>
        <dbReference type="HAMAP-Rule" id="MF_00108"/>
    </source>
</evidence>
<evidence type="ECO:0000256" key="2">
    <source>
        <dbReference type="SAM" id="MobiDB-lite"/>
    </source>
</evidence>
<comment type="function">
    <text evidence="1">Catalyzes the formation of 4-diphosphocytidyl-2-C-methyl-D-erythritol from CTP and 2-C-methyl-D-erythritol 4-phosphate (MEP).</text>
</comment>
<comment type="catalytic activity">
    <reaction evidence="1">
        <text>2-C-methyl-D-erythritol 4-phosphate + CTP + H(+) = 4-CDP-2-C-methyl-D-erythritol + diphosphate</text>
        <dbReference type="Rhea" id="RHEA:13429"/>
        <dbReference type="ChEBI" id="CHEBI:15378"/>
        <dbReference type="ChEBI" id="CHEBI:33019"/>
        <dbReference type="ChEBI" id="CHEBI:37563"/>
        <dbReference type="ChEBI" id="CHEBI:57823"/>
        <dbReference type="ChEBI" id="CHEBI:58262"/>
        <dbReference type="EC" id="2.7.7.60"/>
    </reaction>
</comment>
<comment type="pathway">
    <text evidence="1">Isoprenoid biosynthesis; isopentenyl diphosphate biosynthesis via DXP pathway; isopentenyl diphosphate from 1-deoxy-D-xylulose 5-phosphate: step 2/6.</text>
</comment>
<comment type="similarity">
    <text evidence="1">Belongs to the IspD/TarI cytidylyltransferase family. IspD subfamily.</text>
</comment>
<name>ISPD_STRCO</name>
<proteinExistence type="inferred from homology"/>
<protein>
    <recommendedName>
        <fullName evidence="1">2-C-methyl-D-erythritol 4-phosphate cytidylyltransferase</fullName>
        <ecNumber evidence="1">2.7.7.60</ecNumber>
    </recommendedName>
    <alternativeName>
        <fullName evidence="1">4-diphosphocytidyl-2C-methyl-D-erythritol synthase</fullName>
    </alternativeName>
    <alternativeName>
        <fullName evidence="1">MEP cytidylyltransferase</fullName>
        <shortName evidence="1">MCT</shortName>
    </alternativeName>
</protein>
<sequence length="270" mass="27844">MSDESRPSPAETPATTFAETSAETSAAGRSPARTAAVIPAAGRGVRLGPGAPKALRALGGTPMLIHAVRAMAASRAVSLVVVVAPPDGAGEVKSLLDAHALPERTDFVVVPGGETRQESVRLGLDALPPEYGIVLVHDAARPLVPVDTVDAVIDAVREGAPAVVPAVPLADTVKQVEPAAAPGEPEPVVATPERARLRAVQTPQGFDRATLVRAHGTVTDDVTDDASMVEQLGLAVVVVPGHEEAFKVTRPLDLVLAEAVLARRRLNDGF</sequence>
<accession>Q9L0Q8</accession>
<keyword id="KW-0414">Isoprene biosynthesis</keyword>
<keyword id="KW-0548">Nucleotidyltransferase</keyword>
<keyword id="KW-1185">Reference proteome</keyword>
<keyword id="KW-0808">Transferase</keyword>
<dbReference type="EC" id="2.7.7.60" evidence="1"/>
<dbReference type="EMBL" id="AL939119">
    <property type="protein sequence ID" value="CAB77327.1"/>
    <property type="molecule type" value="Genomic_DNA"/>
</dbReference>
<dbReference type="RefSeq" id="NP_628407.1">
    <property type="nucleotide sequence ID" value="NC_003888.3"/>
</dbReference>
<dbReference type="RefSeq" id="WP_011029521.1">
    <property type="nucleotide sequence ID" value="NZ_VNID01000031.1"/>
</dbReference>
<dbReference type="SMR" id="Q9L0Q8"/>
<dbReference type="FunCoup" id="Q9L0Q8">
    <property type="interactions" value="252"/>
</dbReference>
<dbReference type="STRING" id="100226.gene:17761877"/>
<dbReference type="PaxDb" id="100226-SCO4233"/>
<dbReference type="KEGG" id="sco:SCO4233"/>
<dbReference type="PATRIC" id="fig|100226.15.peg.4295"/>
<dbReference type="eggNOG" id="COG1211">
    <property type="taxonomic scope" value="Bacteria"/>
</dbReference>
<dbReference type="HOGENOM" id="CLU_061281_1_0_11"/>
<dbReference type="InParanoid" id="Q9L0Q8"/>
<dbReference type="OrthoDB" id="9802561at2"/>
<dbReference type="PhylomeDB" id="Q9L0Q8"/>
<dbReference type="UniPathway" id="UPA00056">
    <property type="reaction ID" value="UER00093"/>
</dbReference>
<dbReference type="Proteomes" id="UP000001973">
    <property type="component" value="Chromosome"/>
</dbReference>
<dbReference type="GO" id="GO:0050518">
    <property type="term" value="F:2-C-methyl-D-erythritol 4-phosphate cytidylyltransferase activity"/>
    <property type="evidence" value="ECO:0000318"/>
    <property type="project" value="GO_Central"/>
</dbReference>
<dbReference type="GO" id="GO:0019288">
    <property type="term" value="P:isopentenyl diphosphate biosynthetic process, methylerythritol 4-phosphate pathway"/>
    <property type="evidence" value="ECO:0007669"/>
    <property type="project" value="UniProtKB-UniRule"/>
</dbReference>
<dbReference type="CDD" id="cd02516">
    <property type="entry name" value="CDP-ME_synthetase"/>
    <property type="match status" value="1"/>
</dbReference>
<dbReference type="FunFam" id="3.90.550.10:FF:000003">
    <property type="entry name" value="2-C-methyl-D-erythritol 4-phosphate cytidylyltransferase"/>
    <property type="match status" value="1"/>
</dbReference>
<dbReference type="Gene3D" id="3.90.550.10">
    <property type="entry name" value="Spore Coat Polysaccharide Biosynthesis Protein SpsA, Chain A"/>
    <property type="match status" value="1"/>
</dbReference>
<dbReference type="HAMAP" id="MF_00108">
    <property type="entry name" value="IspD"/>
    <property type="match status" value="1"/>
</dbReference>
<dbReference type="InterPro" id="IPR001228">
    <property type="entry name" value="IspD"/>
</dbReference>
<dbReference type="InterPro" id="IPR034683">
    <property type="entry name" value="IspD/TarI"/>
</dbReference>
<dbReference type="InterPro" id="IPR050088">
    <property type="entry name" value="IspD/TarI_cytidylyltransf_bact"/>
</dbReference>
<dbReference type="InterPro" id="IPR018294">
    <property type="entry name" value="ISPD_synthase_CS"/>
</dbReference>
<dbReference type="InterPro" id="IPR029044">
    <property type="entry name" value="Nucleotide-diphossugar_trans"/>
</dbReference>
<dbReference type="NCBIfam" id="TIGR00453">
    <property type="entry name" value="ispD"/>
    <property type="match status" value="1"/>
</dbReference>
<dbReference type="PANTHER" id="PTHR32125">
    <property type="entry name" value="2-C-METHYL-D-ERYTHRITOL 4-PHOSPHATE CYTIDYLYLTRANSFERASE, CHLOROPLASTIC"/>
    <property type="match status" value="1"/>
</dbReference>
<dbReference type="PANTHER" id="PTHR32125:SF4">
    <property type="entry name" value="2-C-METHYL-D-ERYTHRITOL 4-PHOSPHATE CYTIDYLYLTRANSFERASE, CHLOROPLASTIC"/>
    <property type="match status" value="1"/>
</dbReference>
<dbReference type="Pfam" id="PF01128">
    <property type="entry name" value="IspD"/>
    <property type="match status" value="1"/>
</dbReference>
<dbReference type="SUPFAM" id="SSF53448">
    <property type="entry name" value="Nucleotide-diphospho-sugar transferases"/>
    <property type="match status" value="1"/>
</dbReference>
<dbReference type="PROSITE" id="PS01295">
    <property type="entry name" value="ISPD"/>
    <property type="match status" value="1"/>
</dbReference>
<gene>
    <name evidence="1" type="primary">ispD</name>
    <name type="ordered locus">SCO4233</name>
    <name type="ORF">SCD8A.06</name>
</gene>
<organism>
    <name type="scientific">Streptomyces coelicolor (strain ATCC BAA-471 / A3(2) / M145)</name>
    <dbReference type="NCBI Taxonomy" id="100226"/>
    <lineage>
        <taxon>Bacteria</taxon>
        <taxon>Bacillati</taxon>
        <taxon>Actinomycetota</taxon>
        <taxon>Actinomycetes</taxon>
        <taxon>Kitasatosporales</taxon>
        <taxon>Streptomycetaceae</taxon>
        <taxon>Streptomyces</taxon>
        <taxon>Streptomyces albidoflavus group</taxon>
    </lineage>
</organism>
<feature type="chain" id="PRO_0000075630" description="2-C-methyl-D-erythritol 4-phosphate cytidylyltransferase">
    <location>
        <begin position="1"/>
        <end position="270"/>
    </location>
</feature>
<feature type="region of interest" description="Disordered" evidence="2">
    <location>
        <begin position="1"/>
        <end position="33"/>
    </location>
</feature>
<feature type="compositionally biased region" description="Low complexity" evidence="2">
    <location>
        <begin position="7"/>
        <end position="27"/>
    </location>
</feature>
<feature type="site" description="Transition state stabilizer" evidence="1">
    <location>
        <position position="46"/>
    </location>
</feature>
<feature type="site" description="Transition state stabilizer" evidence="1">
    <location>
        <position position="53"/>
    </location>
</feature>
<feature type="site" description="Positions MEP for the nucleophilic attack" evidence="1">
    <location>
        <position position="194"/>
    </location>
</feature>
<feature type="site" description="Positions MEP for the nucleophilic attack" evidence="1">
    <location>
        <position position="247"/>
    </location>
</feature>
<reference key="1">
    <citation type="journal article" date="2002" name="Nature">
        <title>Complete genome sequence of the model actinomycete Streptomyces coelicolor A3(2).</title>
        <authorList>
            <person name="Bentley S.D."/>
            <person name="Chater K.F."/>
            <person name="Cerdeno-Tarraga A.-M."/>
            <person name="Challis G.L."/>
            <person name="Thomson N.R."/>
            <person name="James K.D."/>
            <person name="Harris D.E."/>
            <person name="Quail M.A."/>
            <person name="Kieser H."/>
            <person name="Harper D."/>
            <person name="Bateman A."/>
            <person name="Brown S."/>
            <person name="Chandra G."/>
            <person name="Chen C.W."/>
            <person name="Collins M."/>
            <person name="Cronin A."/>
            <person name="Fraser A."/>
            <person name="Goble A."/>
            <person name="Hidalgo J."/>
            <person name="Hornsby T."/>
            <person name="Howarth S."/>
            <person name="Huang C.-H."/>
            <person name="Kieser T."/>
            <person name="Larke L."/>
            <person name="Murphy L.D."/>
            <person name="Oliver K."/>
            <person name="O'Neil S."/>
            <person name="Rabbinowitsch E."/>
            <person name="Rajandream M.A."/>
            <person name="Rutherford K.M."/>
            <person name="Rutter S."/>
            <person name="Seeger K."/>
            <person name="Saunders D."/>
            <person name="Sharp S."/>
            <person name="Squares R."/>
            <person name="Squares S."/>
            <person name="Taylor K."/>
            <person name="Warren T."/>
            <person name="Wietzorrek A."/>
            <person name="Woodward J.R."/>
            <person name="Barrell B.G."/>
            <person name="Parkhill J."/>
            <person name="Hopwood D.A."/>
        </authorList>
    </citation>
    <scope>NUCLEOTIDE SEQUENCE [LARGE SCALE GENOMIC DNA]</scope>
    <source>
        <strain>ATCC BAA-471 / A3(2) / M145</strain>
    </source>
</reference>